<keyword id="KW-1003">Cell membrane</keyword>
<keyword id="KW-0472">Membrane</keyword>
<keyword id="KW-0653">Protein transport</keyword>
<keyword id="KW-1185">Reference proteome</keyword>
<keyword id="KW-0811">Translocation</keyword>
<keyword id="KW-0812">Transmembrane</keyword>
<keyword id="KW-1133">Transmembrane helix</keyword>
<keyword id="KW-0813">Transport</keyword>
<reference key="1">
    <citation type="journal article" date="1999" name="Extremophiles">
        <title>An improved physical and genetic map of the genome of alkaliphilic Bacillus sp. C-125.</title>
        <authorList>
            <person name="Takami H."/>
            <person name="Nakasone K."/>
            <person name="Hirama C."/>
            <person name="Takaki Y."/>
            <person name="Masui N."/>
            <person name="Fuji F."/>
            <person name="Nakamura Y."/>
            <person name="Inoue A."/>
        </authorList>
    </citation>
    <scope>NUCLEOTIDE SEQUENCE [GENOMIC DNA]</scope>
    <source>
        <strain>ATCC BAA-125 / DSM 18197 / FERM 7344 / JCM 9153 / C-125</strain>
    </source>
</reference>
<reference key="2">
    <citation type="journal article" date="2000" name="Nucleic Acids Res.">
        <title>Complete genome sequence of the alkaliphilic bacterium Bacillus halodurans and genomic sequence comparison with Bacillus subtilis.</title>
        <authorList>
            <person name="Takami H."/>
            <person name="Nakasone K."/>
            <person name="Takaki Y."/>
            <person name="Maeno G."/>
            <person name="Sasaki R."/>
            <person name="Masui N."/>
            <person name="Fuji F."/>
            <person name="Hirama C."/>
            <person name="Nakamura Y."/>
            <person name="Ogasawara N."/>
            <person name="Kuhara S."/>
            <person name="Horikoshi K."/>
        </authorList>
    </citation>
    <scope>NUCLEOTIDE SEQUENCE [LARGE SCALE GENOMIC DNA]</scope>
    <source>
        <strain>ATCC BAA-125 / DSM 18197 / FERM 7344 / JCM 9153 / C-125</strain>
    </source>
</reference>
<sequence length="253" mass="29405">MNERDMSLMDHIAELRRRILIIVVFFVIALVVGFFLATPMITYLQGAPTAQDLPMNAFKLTDPLRVYMTFAFTSAFILVFPIILYQLWAFVSPGLHENERKATLAYIPIAFFLFLGGLSFAYFILFPFLIQFIGGLAERLHINELYGINEYFTFLFQITMPFGVLFQLPVVVMFLTRLGIVTPEFLRSVRKYAFFVLLVVAGFITPPELISHLMVTVPLLLLYEFSIWVSHLTYRKVQKLEKLRQEEYRQEEG</sequence>
<proteinExistence type="inferred from homology"/>
<dbReference type="EMBL" id="AB013375">
    <property type="protein sequence ID" value="BAA75388.1"/>
    <property type="molecule type" value="Genomic_DNA"/>
</dbReference>
<dbReference type="EMBL" id="BA000004">
    <property type="protein sequence ID" value="BAB04272.1"/>
    <property type="molecule type" value="Genomic_DNA"/>
</dbReference>
<dbReference type="PIR" id="A83719">
    <property type="entry name" value="A83719"/>
</dbReference>
<dbReference type="RefSeq" id="WP_010896730.1">
    <property type="nucleotide sequence ID" value="NC_002570.2"/>
</dbReference>
<dbReference type="SMR" id="Q9Z9P4"/>
<dbReference type="STRING" id="272558.gene:10726422"/>
<dbReference type="KEGG" id="bha:BH0553"/>
<dbReference type="eggNOG" id="COG0805">
    <property type="taxonomic scope" value="Bacteria"/>
</dbReference>
<dbReference type="HOGENOM" id="CLU_031942_3_1_9"/>
<dbReference type="OrthoDB" id="9777044at2"/>
<dbReference type="Proteomes" id="UP000001258">
    <property type="component" value="Chromosome"/>
</dbReference>
<dbReference type="GO" id="GO:0033281">
    <property type="term" value="C:TAT protein transport complex"/>
    <property type="evidence" value="ECO:0007669"/>
    <property type="project" value="UniProtKB-UniRule"/>
</dbReference>
<dbReference type="GO" id="GO:0009977">
    <property type="term" value="F:proton motive force dependent protein transmembrane transporter activity"/>
    <property type="evidence" value="ECO:0007669"/>
    <property type="project" value="TreeGrafter"/>
</dbReference>
<dbReference type="GO" id="GO:0065002">
    <property type="term" value="P:intracellular protein transmembrane transport"/>
    <property type="evidence" value="ECO:0007669"/>
    <property type="project" value="TreeGrafter"/>
</dbReference>
<dbReference type="GO" id="GO:0043953">
    <property type="term" value="P:protein transport by the Tat complex"/>
    <property type="evidence" value="ECO:0007669"/>
    <property type="project" value="UniProtKB-UniRule"/>
</dbReference>
<dbReference type="HAMAP" id="MF_00902">
    <property type="entry name" value="TatC"/>
    <property type="match status" value="1"/>
</dbReference>
<dbReference type="InterPro" id="IPR019820">
    <property type="entry name" value="Sec-indep_translocase_CS"/>
</dbReference>
<dbReference type="InterPro" id="IPR002033">
    <property type="entry name" value="TatC"/>
</dbReference>
<dbReference type="NCBIfam" id="TIGR00945">
    <property type="entry name" value="tatC"/>
    <property type="match status" value="1"/>
</dbReference>
<dbReference type="PANTHER" id="PTHR30371">
    <property type="entry name" value="SEC-INDEPENDENT PROTEIN TRANSLOCASE PROTEIN TATC"/>
    <property type="match status" value="1"/>
</dbReference>
<dbReference type="PANTHER" id="PTHR30371:SF0">
    <property type="entry name" value="SEC-INDEPENDENT PROTEIN TRANSLOCASE PROTEIN TATC, CHLOROPLASTIC-RELATED"/>
    <property type="match status" value="1"/>
</dbReference>
<dbReference type="Pfam" id="PF00902">
    <property type="entry name" value="TatC"/>
    <property type="match status" value="1"/>
</dbReference>
<dbReference type="PRINTS" id="PR01840">
    <property type="entry name" value="TATCFAMILY"/>
</dbReference>
<dbReference type="PROSITE" id="PS01218">
    <property type="entry name" value="TATC"/>
    <property type="match status" value="1"/>
</dbReference>
<organism>
    <name type="scientific">Halalkalibacterium halodurans (strain ATCC BAA-125 / DSM 18197 / FERM 7344 / JCM 9153 / C-125)</name>
    <name type="common">Bacillus halodurans</name>
    <dbReference type="NCBI Taxonomy" id="272558"/>
    <lineage>
        <taxon>Bacteria</taxon>
        <taxon>Bacillati</taxon>
        <taxon>Bacillota</taxon>
        <taxon>Bacilli</taxon>
        <taxon>Bacillales</taxon>
        <taxon>Bacillaceae</taxon>
        <taxon>Halalkalibacterium (ex Joshi et al. 2022)</taxon>
    </lineage>
</organism>
<evidence type="ECO:0000255" key="1">
    <source>
        <dbReference type="HAMAP-Rule" id="MF_00902"/>
    </source>
</evidence>
<feature type="chain" id="PRO_0000098094" description="Sec-independent protein translocase protein TatC">
    <location>
        <begin position="1"/>
        <end position="253"/>
    </location>
</feature>
<feature type="transmembrane region" description="Helical" evidence="1">
    <location>
        <begin position="19"/>
        <end position="39"/>
    </location>
</feature>
<feature type="transmembrane region" description="Helical" evidence="1">
    <location>
        <begin position="70"/>
        <end position="90"/>
    </location>
</feature>
<feature type="transmembrane region" description="Helical" evidence="1">
    <location>
        <begin position="109"/>
        <end position="129"/>
    </location>
</feature>
<feature type="transmembrane region" description="Helical" evidence="1">
    <location>
        <begin position="154"/>
        <end position="174"/>
    </location>
</feature>
<feature type="transmembrane region" description="Helical" evidence="1">
    <location>
        <begin position="194"/>
        <end position="214"/>
    </location>
</feature>
<accession>Q9Z9P4</accession>
<accession>Q9JPW0</accession>
<gene>
    <name evidence="1" type="primary">tatC</name>
    <name type="ordered locus">BH0553</name>
</gene>
<comment type="function">
    <text evidence="1">Part of the twin-arginine translocation (Tat) system that transports large folded proteins containing a characteristic twin-arginine motif in their signal peptide across membranes.</text>
</comment>
<comment type="subunit">
    <text evidence="1">Forms a complex with TatA.</text>
</comment>
<comment type="subcellular location">
    <subcellularLocation>
        <location evidence="1">Cell membrane</location>
        <topology evidence="1">Multi-pass membrane protein</topology>
    </subcellularLocation>
</comment>
<comment type="similarity">
    <text evidence="1">Belongs to the TatC family.</text>
</comment>
<name>TATC_HALH5</name>
<protein>
    <recommendedName>
        <fullName evidence="1">Sec-independent protein translocase protein TatC</fullName>
    </recommendedName>
</protein>